<feature type="signal peptide" evidence="1">
    <location>
        <begin position="1"/>
        <end position="22"/>
    </location>
</feature>
<feature type="chain" id="PRO_1000085050" description="Foldase protein PrsA">
    <location>
        <begin position="23"/>
        <end position="342"/>
    </location>
</feature>
<feature type="domain" description="PpiC" evidence="1">
    <location>
        <begin position="189"/>
        <end position="284"/>
    </location>
</feature>
<feature type="lipid moiety-binding region" description="N-palmitoyl cysteine" evidence="1">
    <location>
        <position position="23"/>
    </location>
</feature>
<feature type="lipid moiety-binding region" description="S-diacylglycerol cysteine" evidence="1">
    <location>
        <position position="23"/>
    </location>
</feature>
<protein>
    <recommendedName>
        <fullName evidence="1">Foldase protein PrsA</fullName>
        <ecNumber evidence="1">5.2.1.8</ecNumber>
    </recommendedName>
</protein>
<evidence type="ECO:0000255" key="1">
    <source>
        <dbReference type="HAMAP-Rule" id="MF_01145"/>
    </source>
</evidence>
<accession>Q0TMG9</accession>
<gene>
    <name evidence="1" type="primary">prsA</name>
    <name type="ordered locus">CPF_2806</name>
</gene>
<keyword id="KW-1003">Cell membrane</keyword>
<keyword id="KW-0413">Isomerase</keyword>
<keyword id="KW-0449">Lipoprotein</keyword>
<keyword id="KW-0472">Membrane</keyword>
<keyword id="KW-0564">Palmitate</keyword>
<keyword id="KW-0697">Rotamase</keyword>
<keyword id="KW-0732">Signal</keyword>
<name>PRSA_CLOP1</name>
<sequence>MVSVKKIVASALVGVLMFSAVGCNMVEKTQAAIDKTTVATVNGEKITLGEVDSHLKGVFAQMKSQYGDKYMDDPQVAQQILQQRQSVVQGLVTDKVLGIEADKLGIKPSEEEIKKKVDEQFENIKKGMGDNFDKALEAEGYTEDTFKDVIKNQVINQAVQDYIIKDVKVTDEDAQKYYDENKQQFVAKDSGVLTKHLLFENEEEAQKAYDEIQSGKTTFNDLFTKYENNKSENKKPIAENLGVVPAENSGLVQEFVDGLKPLKEGEISKPIKTQFGYHIIQAGATYEKGAQLPFDDVKSQIIQILKQQKDSEKFKADMDQWKKDLNVKVYDDKLQEGLKISK</sequence>
<dbReference type="EC" id="5.2.1.8" evidence="1"/>
<dbReference type="EMBL" id="CP000246">
    <property type="protein sequence ID" value="ABG83065.1"/>
    <property type="molecule type" value="Genomic_DNA"/>
</dbReference>
<dbReference type="RefSeq" id="WP_011591143.1">
    <property type="nucleotide sequence ID" value="NC_008261.1"/>
</dbReference>
<dbReference type="SMR" id="Q0TMG9"/>
<dbReference type="STRING" id="195103.CPF_2806"/>
<dbReference type="PaxDb" id="195103-CPF_2806"/>
<dbReference type="KEGG" id="cpf:CPF_2806"/>
<dbReference type="eggNOG" id="COG0760">
    <property type="taxonomic scope" value="Bacteria"/>
</dbReference>
<dbReference type="HOGENOM" id="CLU_034646_5_2_9"/>
<dbReference type="Proteomes" id="UP000001823">
    <property type="component" value="Chromosome"/>
</dbReference>
<dbReference type="GO" id="GO:0005886">
    <property type="term" value="C:plasma membrane"/>
    <property type="evidence" value="ECO:0007669"/>
    <property type="project" value="UniProtKB-SubCell"/>
</dbReference>
<dbReference type="GO" id="GO:0003755">
    <property type="term" value="F:peptidyl-prolyl cis-trans isomerase activity"/>
    <property type="evidence" value="ECO:0007669"/>
    <property type="project" value="UniProtKB-UniRule"/>
</dbReference>
<dbReference type="GO" id="GO:0006457">
    <property type="term" value="P:protein folding"/>
    <property type="evidence" value="ECO:0007669"/>
    <property type="project" value="UniProtKB-UniRule"/>
</dbReference>
<dbReference type="Gene3D" id="3.10.50.40">
    <property type="match status" value="1"/>
</dbReference>
<dbReference type="Gene3D" id="1.10.4030.10">
    <property type="entry name" value="Porin chaperone SurA, peptide-binding domain"/>
    <property type="match status" value="2"/>
</dbReference>
<dbReference type="HAMAP" id="MF_01145">
    <property type="entry name" value="Foldase_PrsA"/>
    <property type="match status" value="1"/>
</dbReference>
<dbReference type="InterPro" id="IPR023059">
    <property type="entry name" value="Foldase_PrsA"/>
</dbReference>
<dbReference type="InterPro" id="IPR046357">
    <property type="entry name" value="PPIase_dom_sf"/>
</dbReference>
<dbReference type="InterPro" id="IPR000297">
    <property type="entry name" value="PPIase_PpiC"/>
</dbReference>
<dbReference type="InterPro" id="IPR050245">
    <property type="entry name" value="PrsA_foldase"/>
</dbReference>
<dbReference type="InterPro" id="IPR027304">
    <property type="entry name" value="Trigger_fact/SurA_dom_sf"/>
</dbReference>
<dbReference type="NCBIfam" id="NF000809">
    <property type="entry name" value="PRK00059.1"/>
    <property type="match status" value="1"/>
</dbReference>
<dbReference type="PANTHER" id="PTHR47245:SF1">
    <property type="entry name" value="FOLDASE PROTEIN PRSA"/>
    <property type="match status" value="1"/>
</dbReference>
<dbReference type="PANTHER" id="PTHR47245">
    <property type="entry name" value="PEPTIDYLPROLYL ISOMERASE"/>
    <property type="match status" value="1"/>
</dbReference>
<dbReference type="Pfam" id="PF13145">
    <property type="entry name" value="Rotamase_2"/>
    <property type="match status" value="1"/>
</dbReference>
<dbReference type="Pfam" id="PF13624">
    <property type="entry name" value="SurA_N_3"/>
    <property type="match status" value="1"/>
</dbReference>
<dbReference type="SUPFAM" id="SSF54534">
    <property type="entry name" value="FKBP-like"/>
    <property type="match status" value="1"/>
</dbReference>
<dbReference type="SUPFAM" id="SSF109998">
    <property type="entry name" value="Triger factor/SurA peptide-binding domain-like"/>
    <property type="match status" value="1"/>
</dbReference>
<dbReference type="PROSITE" id="PS50198">
    <property type="entry name" value="PPIC_PPIASE_2"/>
    <property type="match status" value="1"/>
</dbReference>
<dbReference type="PROSITE" id="PS51257">
    <property type="entry name" value="PROKAR_LIPOPROTEIN"/>
    <property type="match status" value="1"/>
</dbReference>
<reference key="1">
    <citation type="journal article" date="2006" name="Genome Res.">
        <title>Skewed genomic variability in strains of the toxigenic bacterial pathogen, Clostridium perfringens.</title>
        <authorList>
            <person name="Myers G.S.A."/>
            <person name="Rasko D.A."/>
            <person name="Cheung J.K."/>
            <person name="Ravel J."/>
            <person name="Seshadri R."/>
            <person name="DeBoy R.T."/>
            <person name="Ren Q."/>
            <person name="Varga J."/>
            <person name="Awad M.M."/>
            <person name="Brinkac L.M."/>
            <person name="Daugherty S.C."/>
            <person name="Haft D.H."/>
            <person name="Dodson R.J."/>
            <person name="Madupu R."/>
            <person name="Nelson W.C."/>
            <person name="Rosovitz M.J."/>
            <person name="Sullivan S.A."/>
            <person name="Khouri H."/>
            <person name="Dimitrov G.I."/>
            <person name="Watkins K.L."/>
            <person name="Mulligan S."/>
            <person name="Benton J."/>
            <person name="Radune D."/>
            <person name="Fisher D.J."/>
            <person name="Atkins H.S."/>
            <person name="Hiscox T."/>
            <person name="Jost B.H."/>
            <person name="Billington S.J."/>
            <person name="Songer J.G."/>
            <person name="McClane B.A."/>
            <person name="Titball R.W."/>
            <person name="Rood J.I."/>
            <person name="Melville S.B."/>
            <person name="Paulsen I.T."/>
        </authorList>
    </citation>
    <scope>NUCLEOTIDE SEQUENCE [LARGE SCALE GENOMIC DNA]</scope>
    <source>
        <strain>ATCC 13124 / DSM 756 / JCM 1290 / NCIMB 6125 / NCTC 8237 / S 107 / Type A</strain>
    </source>
</reference>
<comment type="function">
    <text evidence="1">Plays a major role in protein secretion by helping the post-translocational extracellular folding of several secreted proteins.</text>
</comment>
<comment type="catalytic activity">
    <reaction evidence="1">
        <text>[protein]-peptidylproline (omega=180) = [protein]-peptidylproline (omega=0)</text>
        <dbReference type="Rhea" id="RHEA:16237"/>
        <dbReference type="Rhea" id="RHEA-COMP:10747"/>
        <dbReference type="Rhea" id="RHEA-COMP:10748"/>
        <dbReference type="ChEBI" id="CHEBI:83833"/>
        <dbReference type="ChEBI" id="CHEBI:83834"/>
        <dbReference type="EC" id="5.2.1.8"/>
    </reaction>
</comment>
<comment type="subcellular location">
    <subcellularLocation>
        <location evidence="1">Cell membrane</location>
        <topology evidence="1">Lipid-anchor</topology>
    </subcellularLocation>
</comment>
<comment type="similarity">
    <text evidence="1">Belongs to the PrsA family.</text>
</comment>
<organism>
    <name type="scientific">Clostridium perfringens (strain ATCC 13124 / DSM 756 / JCM 1290 / NCIMB 6125 / NCTC 8237 / Type A)</name>
    <dbReference type="NCBI Taxonomy" id="195103"/>
    <lineage>
        <taxon>Bacteria</taxon>
        <taxon>Bacillati</taxon>
        <taxon>Bacillota</taxon>
        <taxon>Clostridia</taxon>
        <taxon>Eubacteriales</taxon>
        <taxon>Clostridiaceae</taxon>
        <taxon>Clostridium</taxon>
    </lineage>
</organism>
<proteinExistence type="inferred from homology"/>